<protein>
    <recommendedName>
        <fullName evidence="1">Succinylglutamate desuccinylase</fullName>
        <ecNumber evidence="1">3.5.1.96</ecNumber>
    </recommendedName>
</protein>
<name>ASTE_SHIFL</name>
<proteinExistence type="inferred from homology"/>
<evidence type="ECO:0000255" key="1">
    <source>
        <dbReference type="HAMAP-Rule" id="MF_00767"/>
    </source>
</evidence>
<evidence type="ECO:0000305" key="2"/>
<gene>
    <name evidence="1" type="primary">astE</name>
    <name type="ordered locus">SF1482</name>
    <name type="ordered locus">S1599</name>
</gene>
<accession>Q7UCI6</accession>
<accession>Q83L50</accession>
<organism>
    <name type="scientific">Shigella flexneri</name>
    <dbReference type="NCBI Taxonomy" id="623"/>
    <lineage>
        <taxon>Bacteria</taxon>
        <taxon>Pseudomonadati</taxon>
        <taxon>Pseudomonadota</taxon>
        <taxon>Gammaproteobacteria</taxon>
        <taxon>Enterobacterales</taxon>
        <taxon>Enterobacteriaceae</taxon>
        <taxon>Shigella</taxon>
    </lineage>
</organism>
<feature type="chain" id="PRO_0000174649" description="Succinylglutamate desuccinylase">
    <location>
        <begin position="1"/>
        <end position="322"/>
    </location>
</feature>
<feature type="active site" evidence="1">
    <location>
        <position position="210"/>
    </location>
</feature>
<feature type="binding site" evidence="1">
    <location>
        <position position="53"/>
    </location>
    <ligand>
        <name>Zn(2+)</name>
        <dbReference type="ChEBI" id="CHEBI:29105"/>
    </ligand>
</feature>
<feature type="binding site" evidence="1">
    <location>
        <position position="56"/>
    </location>
    <ligand>
        <name>Zn(2+)</name>
        <dbReference type="ChEBI" id="CHEBI:29105"/>
    </ligand>
</feature>
<feature type="binding site" evidence="1">
    <location>
        <position position="147"/>
    </location>
    <ligand>
        <name>Zn(2+)</name>
        <dbReference type="ChEBI" id="CHEBI:29105"/>
    </ligand>
</feature>
<sequence>MDNFLALTLTGKKPVITEREINGVRWRWLGDGVLELTPLTPPQGALVISAGIHGNETAPVEMLDALLGAISHGEIPLRWRLLVILGNPPALKQGKRYCHSDMNRMFGGRWQLFAESGETCRARELEQCLEDFYDQGKESVRWHLDLHTAIRGSLHPQFGVLPQRDIPWDEKFLTWLGAAGLEALVFHQEPGGTFTHFSVRHFGALACTLELGKALPFGQNDLRQFAVTASAIAALLSGESVGIVRTPPLRYRVVSQITRHSPSFEMHMASDTLNFMPFEKGTLLAQDGEERFTVTHDVEYVLFPNPLVALGLRAGLMLEKIS</sequence>
<keyword id="KW-0056">Arginine metabolism</keyword>
<keyword id="KW-0378">Hydrolase</keyword>
<keyword id="KW-0479">Metal-binding</keyword>
<keyword id="KW-1185">Reference proteome</keyword>
<keyword id="KW-0862">Zinc</keyword>
<comment type="function">
    <text evidence="1">Transforms N(2)-succinylglutamate into succinate and glutamate.</text>
</comment>
<comment type="catalytic activity">
    <reaction evidence="1">
        <text>N-succinyl-L-glutamate + H2O = L-glutamate + succinate</text>
        <dbReference type="Rhea" id="RHEA:15169"/>
        <dbReference type="ChEBI" id="CHEBI:15377"/>
        <dbReference type="ChEBI" id="CHEBI:29985"/>
        <dbReference type="ChEBI" id="CHEBI:30031"/>
        <dbReference type="ChEBI" id="CHEBI:58763"/>
        <dbReference type="EC" id="3.5.1.96"/>
    </reaction>
</comment>
<comment type="cofactor">
    <cofactor evidence="1">
        <name>Zn(2+)</name>
        <dbReference type="ChEBI" id="CHEBI:29105"/>
    </cofactor>
    <text evidence="1">Binds 1 zinc ion per subunit.</text>
</comment>
<comment type="pathway">
    <text evidence="1">Amino-acid degradation; L-arginine degradation via AST pathway; L-glutamate and succinate from L-arginine: step 5/5.</text>
</comment>
<comment type="similarity">
    <text evidence="1">Belongs to the AspA/AstE family. Succinylglutamate desuccinylase subfamily.</text>
</comment>
<comment type="sequence caution" evidence="2">
    <conflict type="erroneous initiation">
        <sequence resource="EMBL-CDS" id="AAN43074"/>
    </conflict>
</comment>
<dbReference type="EC" id="3.5.1.96" evidence="1"/>
<dbReference type="EMBL" id="AE005674">
    <property type="protein sequence ID" value="AAN43074.1"/>
    <property type="status" value="ALT_INIT"/>
    <property type="molecule type" value="Genomic_DNA"/>
</dbReference>
<dbReference type="EMBL" id="AE014073">
    <property type="protein sequence ID" value="AAP16967.1"/>
    <property type="molecule type" value="Genomic_DNA"/>
</dbReference>
<dbReference type="RefSeq" id="WP_000368511.1">
    <property type="nucleotide sequence ID" value="NZ_WPGW01000081.1"/>
</dbReference>
<dbReference type="SMR" id="Q7UCI6"/>
<dbReference type="STRING" id="198214.SF1482"/>
<dbReference type="PaxDb" id="198214-SF1482"/>
<dbReference type="KEGG" id="sfl:SF1482"/>
<dbReference type="KEGG" id="sfx:S1599"/>
<dbReference type="PATRIC" id="fig|198214.7.peg.1750"/>
<dbReference type="HOGENOM" id="CLU_071608_0_0_6"/>
<dbReference type="UniPathway" id="UPA00185">
    <property type="reaction ID" value="UER00283"/>
</dbReference>
<dbReference type="Proteomes" id="UP000001006">
    <property type="component" value="Chromosome"/>
</dbReference>
<dbReference type="Proteomes" id="UP000002673">
    <property type="component" value="Chromosome"/>
</dbReference>
<dbReference type="GO" id="GO:0016788">
    <property type="term" value="F:hydrolase activity, acting on ester bonds"/>
    <property type="evidence" value="ECO:0007669"/>
    <property type="project" value="UniProtKB-UniRule"/>
</dbReference>
<dbReference type="GO" id="GO:0009017">
    <property type="term" value="F:succinylglutamate desuccinylase activity"/>
    <property type="evidence" value="ECO:0007669"/>
    <property type="project" value="UniProtKB-EC"/>
</dbReference>
<dbReference type="GO" id="GO:0008270">
    <property type="term" value="F:zinc ion binding"/>
    <property type="evidence" value="ECO:0007669"/>
    <property type="project" value="UniProtKB-UniRule"/>
</dbReference>
<dbReference type="GO" id="GO:0019544">
    <property type="term" value="P:arginine catabolic process to glutamate"/>
    <property type="evidence" value="ECO:0007669"/>
    <property type="project" value="UniProtKB-UniRule"/>
</dbReference>
<dbReference type="GO" id="GO:0019545">
    <property type="term" value="P:arginine catabolic process to succinate"/>
    <property type="evidence" value="ECO:0007669"/>
    <property type="project" value="UniProtKB-UniRule"/>
</dbReference>
<dbReference type="CDD" id="cd03855">
    <property type="entry name" value="M14_ASTE"/>
    <property type="match status" value="1"/>
</dbReference>
<dbReference type="FunFam" id="3.40.630.10:FF:000017">
    <property type="entry name" value="Succinylglutamate desuccinylase"/>
    <property type="match status" value="1"/>
</dbReference>
<dbReference type="Gene3D" id="3.40.630.10">
    <property type="entry name" value="Zn peptidases"/>
    <property type="match status" value="1"/>
</dbReference>
<dbReference type="HAMAP" id="MF_00767">
    <property type="entry name" value="Arg_catab_AstE"/>
    <property type="match status" value="1"/>
</dbReference>
<dbReference type="InterPro" id="IPR050178">
    <property type="entry name" value="AspA/AstE_fam"/>
</dbReference>
<dbReference type="InterPro" id="IPR055438">
    <property type="entry name" value="AstE_AspA_cat"/>
</dbReference>
<dbReference type="InterPro" id="IPR007036">
    <property type="entry name" value="Aste_AspA_hybrid_dom"/>
</dbReference>
<dbReference type="InterPro" id="IPR016681">
    <property type="entry name" value="SuccinylGlu_desuccinylase"/>
</dbReference>
<dbReference type="NCBIfam" id="TIGR03242">
    <property type="entry name" value="arg_catab_astE"/>
    <property type="match status" value="1"/>
</dbReference>
<dbReference type="NCBIfam" id="NF003706">
    <property type="entry name" value="PRK05324.1"/>
    <property type="match status" value="1"/>
</dbReference>
<dbReference type="PANTHER" id="PTHR15162">
    <property type="entry name" value="ASPARTOACYLASE"/>
    <property type="match status" value="1"/>
</dbReference>
<dbReference type="PANTHER" id="PTHR15162:SF7">
    <property type="entry name" value="SUCCINYLGLUTAMATE DESUCCINYLASE"/>
    <property type="match status" value="1"/>
</dbReference>
<dbReference type="Pfam" id="PF24827">
    <property type="entry name" value="AstE_AspA_cat"/>
    <property type="match status" value="1"/>
</dbReference>
<dbReference type="Pfam" id="PF04952">
    <property type="entry name" value="AstE_AspA_hybrid"/>
    <property type="match status" value="1"/>
</dbReference>
<dbReference type="PIRSF" id="PIRSF017020">
    <property type="entry name" value="AstE"/>
    <property type="match status" value="1"/>
</dbReference>
<dbReference type="SUPFAM" id="SSF53187">
    <property type="entry name" value="Zn-dependent exopeptidases"/>
    <property type="match status" value="1"/>
</dbReference>
<reference key="1">
    <citation type="journal article" date="2002" name="Nucleic Acids Res.">
        <title>Genome sequence of Shigella flexneri 2a: insights into pathogenicity through comparison with genomes of Escherichia coli K12 and O157.</title>
        <authorList>
            <person name="Jin Q."/>
            <person name="Yuan Z."/>
            <person name="Xu J."/>
            <person name="Wang Y."/>
            <person name="Shen Y."/>
            <person name="Lu W."/>
            <person name="Wang J."/>
            <person name="Liu H."/>
            <person name="Yang J."/>
            <person name="Yang F."/>
            <person name="Zhang X."/>
            <person name="Zhang J."/>
            <person name="Yang G."/>
            <person name="Wu H."/>
            <person name="Qu D."/>
            <person name="Dong J."/>
            <person name="Sun L."/>
            <person name="Xue Y."/>
            <person name="Zhao A."/>
            <person name="Gao Y."/>
            <person name="Zhu J."/>
            <person name="Kan B."/>
            <person name="Ding K."/>
            <person name="Chen S."/>
            <person name="Cheng H."/>
            <person name="Yao Z."/>
            <person name="He B."/>
            <person name="Chen R."/>
            <person name="Ma D."/>
            <person name="Qiang B."/>
            <person name="Wen Y."/>
            <person name="Hou Y."/>
            <person name="Yu J."/>
        </authorList>
    </citation>
    <scope>NUCLEOTIDE SEQUENCE [LARGE SCALE GENOMIC DNA]</scope>
    <source>
        <strain>301 / Serotype 2a</strain>
    </source>
</reference>
<reference key="2">
    <citation type="journal article" date="2003" name="Infect. Immun.">
        <title>Complete genome sequence and comparative genomics of Shigella flexneri serotype 2a strain 2457T.</title>
        <authorList>
            <person name="Wei J."/>
            <person name="Goldberg M.B."/>
            <person name="Burland V."/>
            <person name="Venkatesan M.M."/>
            <person name="Deng W."/>
            <person name="Fournier G."/>
            <person name="Mayhew G.F."/>
            <person name="Plunkett G. III"/>
            <person name="Rose D.J."/>
            <person name="Darling A."/>
            <person name="Mau B."/>
            <person name="Perna N.T."/>
            <person name="Payne S.M."/>
            <person name="Runyen-Janecky L.J."/>
            <person name="Zhou S."/>
            <person name="Schwartz D.C."/>
            <person name="Blattner F.R."/>
        </authorList>
    </citation>
    <scope>NUCLEOTIDE SEQUENCE [LARGE SCALE GENOMIC DNA]</scope>
    <source>
        <strain>ATCC 700930 / 2457T / Serotype 2a</strain>
    </source>
</reference>